<sequence length="60" mass="6937">MAKKGNRVQVILECTEHKTSGQPGTSRYITTKNKKNTPDRIELKKFNPILKKMTVHKEIK</sequence>
<keyword id="KW-0687">Ribonucleoprotein</keyword>
<keyword id="KW-0689">Ribosomal protein</keyword>
<protein>
    <recommendedName>
        <fullName evidence="1">Large ribosomal subunit protein bL33</fullName>
    </recommendedName>
    <alternativeName>
        <fullName evidence="2">50S ribosomal protein L33</fullName>
    </alternativeName>
</protein>
<proteinExistence type="inferred from homology"/>
<accession>A0M3L3</accession>
<dbReference type="EMBL" id="CU207366">
    <property type="protein sequence ID" value="CAL67208.1"/>
    <property type="molecule type" value="Genomic_DNA"/>
</dbReference>
<dbReference type="RefSeq" id="WP_011710111.1">
    <property type="nucleotide sequence ID" value="NC_008571.1"/>
</dbReference>
<dbReference type="SMR" id="A0M3L3"/>
<dbReference type="STRING" id="411154.GFO_2243"/>
<dbReference type="KEGG" id="gfo:GFO_2243"/>
<dbReference type="eggNOG" id="COG0267">
    <property type="taxonomic scope" value="Bacteria"/>
</dbReference>
<dbReference type="HOGENOM" id="CLU_190949_3_0_10"/>
<dbReference type="OrthoDB" id="9801333at2"/>
<dbReference type="Proteomes" id="UP000000755">
    <property type="component" value="Chromosome"/>
</dbReference>
<dbReference type="GO" id="GO:0005737">
    <property type="term" value="C:cytoplasm"/>
    <property type="evidence" value="ECO:0007669"/>
    <property type="project" value="UniProtKB-ARBA"/>
</dbReference>
<dbReference type="GO" id="GO:1990904">
    <property type="term" value="C:ribonucleoprotein complex"/>
    <property type="evidence" value="ECO:0007669"/>
    <property type="project" value="UniProtKB-KW"/>
</dbReference>
<dbReference type="GO" id="GO:0005840">
    <property type="term" value="C:ribosome"/>
    <property type="evidence" value="ECO:0007669"/>
    <property type="project" value="UniProtKB-KW"/>
</dbReference>
<dbReference type="GO" id="GO:0003735">
    <property type="term" value="F:structural constituent of ribosome"/>
    <property type="evidence" value="ECO:0007669"/>
    <property type="project" value="InterPro"/>
</dbReference>
<dbReference type="GO" id="GO:0006412">
    <property type="term" value="P:translation"/>
    <property type="evidence" value="ECO:0007669"/>
    <property type="project" value="UniProtKB-UniRule"/>
</dbReference>
<dbReference type="Gene3D" id="2.20.28.120">
    <property type="entry name" value="Ribosomal protein L33"/>
    <property type="match status" value="1"/>
</dbReference>
<dbReference type="HAMAP" id="MF_00294">
    <property type="entry name" value="Ribosomal_bL33"/>
    <property type="match status" value="1"/>
</dbReference>
<dbReference type="InterPro" id="IPR001705">
    <property type="entry name" value="Ribosomal_bL33"/>
</dbReference>
<dbReference type="InterPro" id="IPR038584">
    <property type="entry name" value="Ribosomal_bL33_sf"/>
</dbReference>
<dbReference type="InterPro" id="IPR011332">
    <property type="entry name" value="Ribosomal_zn-bd"/>
</dbReference>
<dbReference type="NCBIfam" id="NF001764">
    <property type="entry name" value="PRK00504.1"/>
    <property type="match status" value="1"/>
</dbReference>
<dbReference type="NCBIfam" id="NF001860">
    <property type="entry name" value="PRK00595.1"/>
    <property type="match status" value="1"/>
</dbReference>
<dbReference type="NCBIfam" id="TIGR01023">
    <property type="entry name" value="rpmG_bact"/>
    <property type="match status" value="1"/>
</dbReference>
<dbReference type="PANTHER" id="PTHR43168">
    <property type="entry name" value="50S RIBOSOMAL PROTEIN L33, CHLOROPLASTIC"/>
    <property type="match status" value="1"/>
</dbReference>
<dbReference type="PANTHER" id="PTHR43168:SF2">
    <property type="entry name" value="LARGE RIBOSOMAL SUBUNIT PROTEIN BL33C"/>
    <property type="match status" value="1"/>
</dbReference>
<dbReference type="Pfam" id="PF00471">
    <property type="entry name" value="Ribosomal_L33"/>
    <property type="match status" value="1"/>
</dbReference>
<dbReference type="SUPFAM" id="SSF57829">
    <property type="entry name" value="Zn-binding ribosomal proteins"/>
    <property type="match status" value="1"/>
</dbReference>
<name>RL33_CHRFK</name>
<feature type="chain" id="PRO_1000059278" description="Large ribosomal subunit protein bL33">
    <location>
        <begin position="1"/>
        <end position="60"/>
    </location>
</feature>
<organism>
    <name type="scientific">Christiangramia forsetii (strain DSM 17595 / CGMCC 1.15422 / KT0803)</name>
    <name type="common">Gramella forsetii</name>
    <dbReference type="NCBI Taxonomy" id="411154"/>
    <lineage>
        <taxon>Bacteria</taxon>
        <taxon>Pseudomonadati</taxon>
        <taxon>Bacteroidota</taxon>
        <taxon>Flavobacteriia</taxon>
        <taxon>Flavobacteriales</taxon>
        <taxon>Flavobacteriaceae</taxon>
        <taxon>Christiangramia</taxon>
    </lineage>
</organism>
<comment type="similarity">
    <text evidence="1">Belongs to the bacterial ribosomal protein bL33 family.</text>
</comment>
<reference key="1">
    <citation type="journal article" date="2006" name="Environ. Microbiol.">
        <title>Whole genome analysis of the marine Bacteroidetes'Gramella forsetii' reveals adaptations to degradation of polymeric organic matter.</title>
        <authorList>
            <person name="Bauer M."/>
            <person name="Kube M."/>
            <person name="Teeling H."/>
            <person name="Richter M."/>
            <person name="Lombardot T."/>
            <person name="Allers E."/>
            <person name="Wuerdemann C.A."/>
            <person name="Quast C."/>
            <person name="Kuhl H."/>
            <person name="Knaust F."/>
            <person name="Woebken D."/>
            <person name="Bischof K."/>
            <person name="Mussmann M."/>
            <person name="Choudhuri J.V."/>
            <person name="Meyer F."/>
            <person name="Reinhardt R."/>
            <person name="Amann R.I."/>
            <person name="Gloeckner F.O."/>
        </authorList>
    </citation>
    <scope>NUCLEOTIDE SEQUENCE [LARGE SCALE GENOMIC DNA]</scope>
    <source>
        <strain>DSM 17595 / CGMCC 1.15422 / KT0803</strain>
    </source>
</reference>
<evidence type="ECO:0000255" key="1">
    <source>
        <dbReference type="HAMAP-Rule" id="MF_00294"/>
    </source>
</evidence>
<evidence type="ECO:0000305" key="2"/>
<gene>
    <name evidence="1" type="primary">rpmG</name>
    <name type="ordered locus">GFO_2243</name>
</gene>